<proteinExistence type="inferred from homology"/>
<dbReference type="EC" id="6.3.5.5" evidence="1"/>
<dbReference type="EMBL" id="AL111168">
    <property type="protein sequence ID" value="CAL35601.1"/>
    <property type="molecule type" value="Genomic_DNA"/>
</dbReference>
<dbReference type="PIR" id="C81296">
    <property type="entry name" value="C81296"/>
</dbReference>
<dbReference type="RefSeq" id="WP_002851156.1">
    <property type="nucleotide sequence ID" value="NZ_SZUC01000003.1"/>
</dbReference>
<dbReference type="RefSeq" id="YP_002344874.1">
    <property type="nucleotide sequence ID" value="NC_002163.1"/>
</dbReference>
<dbReference type="SMR" id="Q9PMG8"/>
<dbReference type="IntAct" id="Q9PMG8">
    <property type="interactions" value="29"/>
</dbReference>
<dbReference type="STRING" id="192222.Cj1494c"/>
<dbReference type="PaxDb" id="192222-Cj1494c"/>
<dbReference type="EnsemblBacteria" id="CAL35601">
    <property type="protein sequence ID" value="CAL35601"/>
    <property type="gene ID" value="Cj1494c"/>
</dbReference>
<dbReference type="GeneID" id="905785"/>
<dbReference type="KEGG" id="cje:Cj1494c"/>
<dbReference type="PATRIC" id="fig|192222.6.peg.1474"/>
<dbReference type="eggNOG" id="COG0505">
    <property type="taxonomic scope" value="Bacteria"/>
</dbReference>
<dbReference type="HOGENOM" id="CLU_035901_2_1_7"/>
<dbReference type="OrthoDB" id="9804328at2"/>
<dbReference type="UniPathway" id="UPA00068">
    <property type="reaction ID" value="UER00171"/>
</dbReference>
<dbReference type="UniPathway" id="UPA00070">
    <property type="reaction ID" value="UER00115"/>
</dbReference>
<dbReference type="Proteomes" id="UP000000799">
    <property type="component" value="Chromosome"/>
</dbReference>
<dbReference type="GO" id="GO:0005524">
    <property type="term" value="F:ATP binding"/>
    <property type="evidence" value="ECO:0007669"/>
    <property type="project" value="UniProtKB-UniRule"/>
</dbReference>
<dbReference type="GO" id="GO:0004088">
    <property type="term" value="F:carbamoyl-phosphate synthase (glutamine-hydrolyzing) activity"/>
    <property type="evidence" value="ECO:0007669"/>
    <property type="project" value="UniProtKB-UniRule"/>
</dbReference>
<dbReference type="GO" id="GO:0004359">
    <property type="term" value="F:glutaminase activity"/>
    <property type="evidence" value="ECO:0007669"/>
    <property type="project" value="RHEA"/>
</dbReference>
<dbReference type="GO" id="GO:0006207">
    <property type="term" value="P:'de novo' pyrimidine nucleobase biosynthetic process"/>
    <property type="evidence" value="ECO:0007669"/>
    <property type="project" value="InterPro"/>
</dbReference>
<dbReference type="GO" id="GO:0044205">
    <property type="term" value="P:'de novo' UMP biosynthetic process"/>
    <property type="evidence" value="ECO:0007669"/>
    <property type="project" value="UniProtKB-UniRule"/>
</dbReference>
<dbReference type="GO" id="GO:0006541">
    <property type="term" value="P:glutamine metabolic process"/>
    <property type="evidence" value="ECO:0007669"/>
    <property type="project" value="InterPro"/>
</dbReference>
<dbReference type="GO" id="GO:0006526">
    <property type="term" value="P:L-arginine biosynthetic process"/>
    <property type="evidence" value="ECO:0007669"/>
    <property type="project" value="UniProtKB-UniRule"/>
</dbReference>
<dbReference type="CDD" id="cd01744">
    <property type="entry name" value="GATase1_CPSase"/>
    <property type="match status" value="1"/>
</dbReference>
<dbReference type="Gene3D" id="3.40.50.880">
    <property type="match status" value="1"/>
</dbReference>
<dbReference type="Gene3D" id="3.50.30.20">
    <property type="entry name" value="Carbamoyl-phosphate synthase small subunit, N-terminal domain"/>
    <property type="match status" value="1"/>
</dbReference>
<dbReference type="HAMAP" id="MF_01209">
    <property type="entry name" value="CPSase_S_chain"/>
    <property type="match status" value="1"/>
</dbReference>
<dbReference type="InterPro" id="IPR050472">
    <property type="entry name" value="Anth_synth/Amidotransfase"/>
</dbReference>
<dbReference type="InterPro" id="IPR006274">
    <property type="entry name" value="CarbamoylP_synth_ssu"/>
</dbReference>
<dbReference type="InterPro" id="IPR002474">
    <property type="entry name" value="CarbamoylP_synth_ssu_N"/>
</dbReference>
<dbReference type="InterPro" id="IPR036480">
    <property type="entry name" value="CarbP_synth_ssu_N_sf"/>
</dbReference>
<dbReference type="InterPro" id="IPR029062">
    <property type="entry name" value="Class_I_gatase-like"/>
</dbReference>
<dbReference type="InterPro" id="IPR035686">
    <property type="entry name" value="CPSase_GATase1"/>
</dbReference>
<dbReference type="InterPro" id="IPR017926">
    <property type="entry name" value="GATASE"/>
</dbReference>
<dbReference type="NCBIfam" id="TIGR01368">
    <property type="entry name" value="CPSaseIIsmall"/>
    <property type="match status" value="1"/>
</dbReference>
<dbReference type="NCBIfam" id="NF009475">
    <property type="entry name" value="PRK12838.1"/>
    <property type="match status" value="1"/>
</dbReference>
<dbReference type="PANTHER" id="PTHR43418:SF7">
    <property type="entry name" value="CARBAMOYL-PHOSPHATE SYNTHASE SMALL CHAIN"/>
    <property type="match status" value="1"/>
</dbReference>
<dbReference type="PANTHER" id="PTHR43418">
    <property type="entry name" value="MULTIFUNCTIONAL TRYPTOPHAN BIOSYNTHESIS PROTEIN-RELATED"/>
    <property type="match status" value="1"/>
</dbReference>
<dbReference type="Pfam" id="PF00988">
    <property type="entry name" value="CPSase_sm_chain"/>
    <property type="match status" value="1"/>
</dbReference>
<dbReference type="Pfam" id="PF00117">
    <property type="entry name" value="GATase"/>
    <property type="match status" value="1"/>
</dbReference>
<dbReference type="PRINTS" id="PR00097">
    <property type="entry name" value="ANTSNTHASEII"/>
</dbReference>
<dbReference type="PRINTS" id="PR00099">
    <property type="entry name" value="CPSGATASE"/>
</dbReference>
<dbReference type="PRINTS" id="PR00096">
    <property type="entry name" value="GATASE"/>
</dbReference>
<dbReference type="SMART" id="SM01097">
    <property type="entry name" value="CPSase_sm_chain"/>
    <property type="match status" value="1"/>
</dbReference>
<dbReference type="SUPFAM" id="SSF52021">
    <property type="entry name" value="Carbamoyl phosphate synthetase, small subunit N-terminal domain"/>
    <property type="match status" value="1"/>
</dbReference>
<dbReference type="SUPFAM" id="SSF52317">
    <property type="entry name" value="Class I glutamine amidotransferase-like"/>
    <property type="match status" value="1"/>
</dbReference>
<dbReference type="PROSITE" id="PS51273">
    <property type="entry name" value="GATASE_TYPE_1"/>
    <property type="match status" value="1"/>
</dbReference>
<reference key="1">
    <citation type="journal article" date="2000" name="Nature">
        <title>The genome sequence of the food-borne pathogen Campylobacter jejuni reveals hypervariable sequences.</title>
        <authorList>
            <person name="Parkhill J."/>
            <person name="Wren B.W."/>
            <person name="Mungall K.L."/>
            <person name="Ketley J.M."/>
            <person name="Churcher C.M."/>
            <person name="Basham D."/>
            <person name="Chillingworth T."/>
            <person name="Davies R.M."/>
            <person name="Feltwell T."/>
            <person name="Holroyd S."/>
            <person name="Jagels K."/>
            <person name="Karlyshev A.V."/>
            <person name="Moule S."/>
            <person name="Pallen M.J."/>
            <person name="Penn C.W."/>
            <person name="Quail M.A."/>
            <person name="Rajandream M.A."/>
            <person name="Rutherford K.M."/>
            <person name="van Vliet A.H.M."/>
            <person name="Whitehead S."/>
            <person name="Barrell B.G."/>
        </authorList>
    </citation>
    <scope>NUCLEOTIDE SEQUENCE [LARGE SCALE GENOMIC DNA]</scope>
    <source>
        <strain>ATCC 700819 / NCTC 11168</strain>
    </source>
</reference>
<organism>
    <name type="scientific">Campylobacter jejuni subsp. jejuni serotype O:2 (strain ATCC 700819 / NCTC 11168)</name>
    <dbReference type="NCBI Taxonomy" id="192222"/>
    <lineage>
        <taxon>Bacteria</taxon>
        <taxon>Pseudomonadati</taxon>
        <taxon>Campylobacterota</taxon>
        <taxon>Epsilonproteobacteria</taxon>
        <taxon>Campylobacterales</taxon>
        <taxon>Campylobacteraceae</taxon>
        <taxon>Campylobacter</taxon>
    </lineage>
</organism>
<gene>
    <name evidence="1" type="primary">carA</name>
    <name type="ordered locus">Cj1494c</name>
</gene>
<feature type="chain" id="PRO_0000112264" description="Carbamoyl phosphate synthase small chain">
    <location>
        <begin position="1"/>
        <end position="372"/>
    </location>
</feature>
<feature type="domain" description="Glutamine amidotransferase type-1" evidence="1">
    <location>
        <begin position="188"/>
        <end position="372"/>
    </location>
</feature>
<feature type="region of interest" description="CPSase" evidence="1">
    <location>
        <begin position="1"/>
        <end position="184"/>
    </location>
</feature>
<feature type="active site" description="Nucleophile" evidence="1">
    <location>
        <position position="268"/>
    </location>
</feature>
<feature type="active site" evidence="1">
    <location>
        <position position="351"/>
    </location>
</feature>
<feature type="active site" evidence="1">
    <location>
        <position position="353"/>
    </location>
</feature>
<feature type="binding site" evidence="1">
    <location>
        <position position="45"/>
    </location>
    <ligand>
        <name>L-glutamine</name>
        <dbReference type="ChEBI" id="CHEBI:58359"/>
    </ligand>
</feature>
<feature type="binding site" evidence="1">
    <location>
        <position position="240"/>
    </location>
    <ligand>
        <name>L-glutamine</name>
        <dbReference type="ChEBI" id="CHEBI:58359"/>
    </ligand>
</feature>
<feature type="binding site" evidence="1">
    <location>
        <position position="242"/>
    </location>
    <ligand>
        <name>L-glutamine</name>
        <dbReference type="ChEBI" id="CHEBI:58359"/>
    </ligand>
</feature>
<feature type="binding site" evidence="1">
    <location>
        <position position="269"/>
    </location>
    <ligand>
        <name>L-glutamine</name>
        <dbReference type="ChEBI" id="CHEBI:58359"/>
    </ligand>
</feature>
<feature type="binding site" evidence="1">
    <location>
        <position position="272"/>
    </location>
    <ligand>
        <name>L-glutamine</name>
        <dbReference type="ChEBI" id="CHEBI:58359"/>
    </ligand>
</feature>
<feature type="binding site" evidence="1">
    <location>
        <position position="310"/>
    </location>
    <ligand>
        <name>L-glutamine</name>
        <dbReference type="ChEBI" id="CHEBI:58359"/>
    </ligand>
</feature>
<feature type="binding site" evidence="1">
    <location>
        <position position="313"/>
    </location>
    <ligand>
        <name>L-glutamine</name>
        <dbReference type="ChEBI" id="CHEBI:58359"/>
    </ligand>
</feature>
<keyword id="KW-0028">Amino-acid biosynthesis</keyword>
<keyword id="KW-0055">Arginine biosynthesis</keyword>
<keyword id="KW-0067">ATP-binding</keyword>
<keyword id="KW-0315">Glutamine amidotransferase</keyword>
<keyword id="KW-0436">Ligase</keyword>
<keyword id="KW-0547">Nucleotide-binding</keyword>
<keyword id="KW-0665">Pyrimidine biosynthesis</keyword>
<keyword id="KW-1185">Reference proteome</keyword>
<protein>
    <recommendedName>
        <fullName evidence="1">Carbamoyl phosphate synthase small chain</fullName>
        <ecNumber evidence="1">6.3.5.5</ecNumber>
    </recommendedName>
    <alternativeName>
        <fullName evidence="1">Carbamoyl phosphate synthetase glutamine chain</fullName>
    </alternativeName>
</protein>
<comment type="function">
    <text evidence="1">Small subunit of the glutamine-dependent carbamoyl phosphate synthetase (CPSase). CPSase catalyzes the formation of carbamoyl phosphate from the ammonia moiety of glutamine, carbonate, and phosphate donated by ATP, constituting the first step of 2 biosynthetic pathways, one leading to arginine and/or urea and the other to pyrimidine nucleotides. The small subunit (glutamine amidotransferase) binds and cleaves glutamine to supply the large subunit with the substrate ammonia.</text>
</comment>
<comment type="catalytic activity">
    <reaction evidence="1">
        <text>hydrogencarbonate + L-glutamine + 2 ATP + H2O = carbamoyl phosphate + L-glutamate + 2 ADP + phosphate + 2 H(+)</text>
        <dbReference type="Rhea" id="RHEA:18633"/>
        <dbReference type="ChEBI" id="CHEBI:15377"/>
        <dbReference type="ChEBI" id="CHEBI:15378"/>
        <dbReference type="ChEBI" id="CHEBI:17544"/>
        <dbReference type="ChEBI" id="CHEBI:29985"/>
        <dbReference type="ChEBI" id="CHEBI:30616"/>
        <dbReference type="ChEBI" id="CHEBI:43474"/>
        <dbReference type="ChEBI" id="CHEBI:58228"/>
        <dbReference type="ChEBI" id="CHEBI:58359"/>
        <dbReference type="ChEBI" id="CHEBI:456216"/>
        <dbReference type="EC" id="6.3.5.5"/>
    </reaction>
</comment>
<comment type="catalytic activity">
    <molecule>Carbamoyl phosphate synthase small chain</molecule>
    <reaction evidence="1">
        <text>L-glutamine + H2O = L-glutamate + NH4(+)</text>
        <dbReference type="Rhea" id="RHEA:15889"/>
        <dbReference type="ChEBI" id="CHEBI:15377"/>
        <dbReference type="ChEBI" id="CHEBI:28938"/>
        <dbReference type="ChEBI" id="CHEBI:29985"/>
        <dbReference type="ChEBI" id="CHEBI:58359"/>
    </reaction>
</comment>
<comment type="pathway">
    <text evidence="1">Amino-acid biosynthesis; L-arginine biosynthesis; carbamoyl phosphate from bicarbonate: step 1/1.</text>
</comment>
<comment type="pathway">
    <text evidence="1">Pyrimidine metabolism; UMP biosynthesis via de novo pathway; (S)-dihydroorotate from bicarbonate: step 1/3.</text>
</comment>
<comment type="subunit">
    <text evidence="1">Composed of two chains; the small (or glutamine) chain promotes the hydrolysis of glutamine to ammonia, which is used by the large (or ammonia) chain to synthesize carbamoyl phosphate. Tetramer of heterodimers (alpha,beta)4.</text>
</comment>
<comment type="similarity">
    <text evidence="1">Belongs to the CarA family.</text>
</comment>
<sequence>MKAYIYLENDIFLSAKAFGKSGTFFGELVFNTSLTGYQEIISDPSYAGQFIVFSMPEIGIVGTNENDNESKEIFASGVLMRELSSSFSNFRAKESLQDYLEKHGKIGIYELDTRYLVKMIRNNGNLRAVISTEISNKEDLKIALEKSAKIDEVNFVKEVSTKKNYSHKQGVWNASFQKFNDAKRSEKKVAVIDYGVKTNILNELVEVGFEVEVYPYNVKADELITLYKKGEIQGVFLSNGPGEPRILKQEIAEIKKLAEAKIPMLGICLGHQLLSNAFGYETYKMKFGQHGANHPVINLDTKTVEITAQNHNYNVPEELAQVAHITHRNLFGDNVEGVRYKDYPIISVQHHPESSSGPHESKYIFKEFMNLM</sequence>
<accession>Q9PMG8</accession>
<accession>Q0P8C3</accession>
<evidence type="ECO:0000255" key="1">
    <source>
        <dbReference type="HAMAP-Rule" id="MF_01209"/>
    </source>
</evidence>
<name>CARA_CAMJE</name>